<organism>
    <name type="scientific">Capnoides sempervirens</name>
    <name type="common">Rock-harlequin</name>
    <name type="synonym">Corydalis sempervirens</name>
    <dbReference type="NCBI Taxonomy" id="3464"/>
    <lineage>
        <taxon>Eukaryota</taxon>
        <taxon>Viridiplantae</taxon>
        <taxon>Streptophyta</taxon>
        <taxon>Embryophyta</taxon>
        <taxon>Tracheophyta</taxon>
        <taxon>Spermatophyta</taxon>
        <taxon>Magnoliopsida</taxon>
        <taxon>Ranunculales</taxon>
        <taxon>Papaveraceae</taxon>
        <taxon>Fumarioideae</taxon>
        <taxon>Capnoides</taxon>
    </lineage>
</organism>
<proteinExistence type="evidence at transcript level"/>
<keyword id="KW-0255">Endonuclease</keyword>
<keyword id="KW-0378">Hydrolase</keyword>
<keyword id="KW-0540">Nuclease</keyword>
<name>Y38K_CAPSE</name>
<feature type="chain" id="PRO_0000215284" description="Uncharacterized 38.1 kDa protein">
    <location>
        <begin position="1"/>
        <end position="338"/>
    </location>
</feature>
<feature type="domain" description="TNase-like" evidence="2">
    <location>
        <begin position="144"/>
        <end position="321"/>
    </location>
</feature>
<feature type="active site" evidence="1">
    <location>
        <position position="228"/>
    </location>
</feature>
<feature type="active site" evidence="1">
    <location>
        <position position="236"/>
    </location>
</feature>
<feature type="active site" evidence="1">
    <location>
        <position position="270"/>
    </location>
</feature>
<evidence type="ECO:0000250" key="1"/>
<evidence type="ECO:0000255" key="2">
    <source>
        <dbReference type="PROSITE-ProRule" id="PRU00272"/>
    </source>
</evidence>
<protein>
    <recommendedName>
        <fullName>Uncharacterized 38.1 kDa protein</fullName>
    </recommendedName>
</protein>
<accession>Q39635</accession>
<sequence>MGNALRFLYGHCCKPTVEDHYQPPHGYGVSTATVGVSALAHDLFHFENTSQIPEGLTKYVVSSKKAQTNWYKKLSQAWREAKPPPQTAEQATRLIILTLKRHQKADVKGLLRFYGLPLSNNPSTEATTVVAPPQADQGVKFELHTLPVDVKAVADGDTVTVYVNTEDPREASNLPKSVKVAAQERAKARAVRDYVKADALQKNIVDAGYRVLSGPNNEDILARKYRIRLRGIDSPESSMPFGKEAKEELIKLVVGKCLTVHIYEEDRYGRSVGDIYCNGQFIQEKMLKKGLAWHYTAYDKRPQLSKWEEKARAARVGLWASSNPEKPWEWRKNKRNGK</sequence>
<reference key="1">
    <citation type="journal article" date="1992" name="Plant Physiol.">
        <title>Plant cDNA similar to a bacterial plasmid partition locus.</title>
        <authorList>
            <person name="Schaller A."/>
            <person name="Schmid J."/>
            <person name="Amrhein N."/>
        </authorList>
    </citation>
    <scope>NUCLEOTIDE SEQUENCE [MRNA]</scope>
</reference>
<dbReference type="EMBL" id="X63595">
    <property type="protein sequence ID" value="CAA45139.1"/>
    <property type="molecule type" value="mRNA"/>
</dbReference>
<dbReference type="PIR" id="S24930">
    <property type="entry name" value="S24930"/>
</dbReference>
<dbReference type="SMR" id="Q39635"/>
<dbReference type="GO" id="GO:0005737">
    <property type="term" value="C:cytoplasm"/>
    <property type="evidence" value="ECO:0007669"/>
    <property type="project" value="TreeGrafter"/>
</dbReference>
<dbReference type="GO" id="GO:0004519">
    <property type="term" value="F:endonuclease activity"/>
    <property type="evidence" value="ECO:0007669"/>
    <property type="project" value="UniProtKB-KW"/>
</dbReference>
<dbReference type="GO" id="GO:0003676">
    <property type="term" value="F:nucleic acid binding"/>
    <property type="evidence" value="ECO:0007669"/>
    <property type="project" value="InterPro"/>
</dbReference>
<dbReference type="Gene3D" id="2.40.50.90">
    <property type="match status" value="1"/>
</dbReference>
<dbReference type="InterPro" id="IPR035437">
    <property type="entry name" value="SNase_OB-fold_sf"/>
</dbReference>
<dbReference type="InterPro" id="IPR016071">
    <property type="entry name" value="Staphylococal_nuclease_OB-fold"/>
</dbReference>
<dbReference type="InterPro" id="IPR002071">
    <property type="entry name" value="Thermonucl_AS"/>
</dbReference>
<dbReference type="PANTHER" id="PTHR12302">
    <property type="entry name" value="EBNA2 BINDING PROTEIN P100"/>
    <property type="match status" value="1"/>
</dbReference>
<dbReference type="PANTHER" id="PTHR12302:SF3">
    <property type="entry name" value="SERINE_THREONINE-PROTEIN KINASE 31"/>
    <property type="match status" value="1"/>
</dbReference>
<dbReference type="Pfam" id="PF00565">
    <property type="entry name" value="SNase"/>
    <property type="match status" value="1"/>
</dbReference>
<dbReference type="SMART" id="SM00318">
    <property type="entry name" value="SNc"/>
    <property type="match status" value="1"/>
</dbReference>
<dbReference type="SUPFAM" id="SSF50199">
    <property type="entry name" value="Staphylococcal nuclease"/>
    <property type="match status" value="1"/>
</dbReference>
<dbReference type="PROSITE" id="PS01284">
    <property type="entry name" value="TNASE_2"/>
    <property type="match status" value="1"/>
</dbReference>
<dbReference type="PROSITE" id="PS50830">
    <property type="entry name" value="TNASE_3"/>
    <property type="match status" value="1"/>
</dbReference>